<dbReference type="EMBL" id="CP000246">
    <property type="protein sequence ID" value="ABG84102.1"/>
    <property type="molecule type" value="Genomic_DNA"/>
</dbReference>
<dbReference type="RefSeq" id="WP_003471963.1">
    <property type="nucleotide sequence ID" value="NC_008261.1"/>
</dbReference>
<dbReference type="SMR" id="Q0TUQ9"/>
<dbReference type="STRING" id="195103.CPF_0167"/>
<dbReference type="PaxDb" id="195103-CPF_0167"/>
<dbReference type="KEGG" id="cpf:CPF_0167"/>
<dbReference type="eggNOG" id="COG1970">
    <property type="taxonomic scope" value="Bacteria"/>
</dbReference>
<dbReference type="HOGENOM" id="CLU_095787_2_3_9"/>
<dbReference type="Proteomes" id="UP000001823">
    <property type="component" value="Chromosome"/>
</dbReference>
<dbReference type="GO" id="GO:0005886">
    <property type="term" value="C:plasma membrane"/>
    <property type="evidence" value="ECO:0007669"/>
    <property type="project" value="UniProtKB-SubCell"/>
</dbReference>
<dbReference type="GO" id="GO:0008381">
    <property type="term" value="F:mechanosensitive monoatomic ion channel activity"/>
    <property type="evidence" value="ECO:0007669"/>
    <property type="project" value="UniProtKB-UniRule"/>
</dbReference>
<dbReference type="Gene3D" id="1.10.1200.120">
    <property type="entry name" value="Large-conductance mechanosensitive channel, MscL, domain 1"/>
    <property type="match status" value="1"/>
</dbReference>
<dbReference type="HAMAP" id="MF_00115">
    <property type="entry name" value="MscL"/>
    <property type="match status" value="1"/>
</dbReference>
<dbReference type="InterPro" id="IPR019823">
    <property type="entry name" value="Mechanosensitive_channel_CS"/>
</dbReference>
<dbReference type="InterPro" id="IPR001185">
    <property type="entry name" value="MS_channel"/>
</dbReference>
<dbReference type="InterPro" id="IPR037673">
    <property type="entry name" value="MSC/AndL"/>
</dbReference>
<dbReference type="InterPro" id="IPR036019">
    <property type="entry name" value="MscL_channel"/>
</dbReference>
<dbReference type="NCBIfam" id="TIGR00220">
    <property type="entry name" value="mscL"/>
    <property type="match status" value="1"/>
</dbReference>
<dbReference type="NCBIfam" id="NF001843">
    <property type="entry name" value="PRK00567.1-4"/>
    <property type="match status" value="1"/>
</dbReference>
<dbReference type="NCBIfam" id="NF010557">
    <property type="entry name" value="PRK13952.1"/>
    <property type="match status" value="1"/>
</dbReference>
<dbReference type="PANTHER" id="PTHR30266:SF2">
    <property type="entry name" value="LARGE-CONDUCTANCE MECHANOSENSITIVE CHANNEL"/>
    <property type="match status" value="1"/>
</dbReference>
<dbReference type="PANTHER" id="PTHR30266">
    <property type="entry name" value="MECHANOSENSITIVE CHANNEL MSCL"/>
    <property type="match status" value="1"/>
</dbReference>
<dbReference type="Pfam" id="PF01741">
    <property type="entry name" value="MscL"/>
    <property type="match status" value="1"/>
</dbReference>
<dbReference type="PRINTS" id="PR01264">
    <property type="entry name" value="MECHCHANNEL"/>
</dbReference>
<dbReference type="SUPFAM" id="SSF81330">
    <property type="entry name" value="Gated mechanosensitive channel"/>
    <property type="match status" value="1"/>
</dbReference>
<dbReference type="PROSITE" id="PS01327">
    <property type="entry name" value="MSCL"/>
    <property type="match status" value="1"/>
</dbReference>
<comment type="function">
    <text evidence="1">Channel that opens in response to stretch forces in the membrane lipid bilayer. May participate in the regulation of osmotic pressure changes within the cell.</text>
</comment>
<comment type="subunit">
    <text evidence="1">Homopentamer.</text>
</comment>
<comment type="subcellular location">
    <subcellularLocation>
        <location evidence="1">Cell membrane</location>
        <topology evidence="1">Multi-pass membrane protein</topology>
    </subcellularLocation>
</comment>
<comment type="similarity">
    <text evidence="1">Belongs to the MscL family.</text>
</comment>
<accession>Q0TUQ9</accession>
<reference key="1">
    <citation type="journal article" date="2006" name="Genome Res.">
        <title>Skewed genomic variability in strains of the toxigenic bacterial pathogen, Clostridium perfringens.</title>
        <authorList>
            <person name="Myers G.S.A."/>
            <person name="Rasko D.A."/>
            <person name="Cheung J.K."/>
            <person name="Ravel J."/>
            <person name="Seshadri R."/>
            <person name="DeBoy R.T."/>
            <person name="Ren Q."/>
            <person name="Varga J."/>
            <person name="Awad M.M."/>
            <person name="Brinkac L.M."/>
            <person name="Daugherty S.C."/>
            <person name="Haft D.H."/>
            <person name="Dodson R.J."/>
            <person name="Madupu R."/>
            <person name="Nelson W.C."/>
            <person name="Rosovitz M.J."/>
            <person name="Sullivan S.A."/>
            <person name="Khouri H."/>
            <person name="Dimitrov G.I."/>
            <person name="Watkins K.L."/>
            <person name="Mulligan S."/>
            <person name="Benton J."/>
            <person name="Radune D."/>
            <person name="Fisher D.J."/>
            <person name="Atkins H.S."/>
            <person name="Hiscox T."/>
            <person name="Jost B.H."/>
            <person name="Billington S.J."/>
            <person name="Songer J.G."/>
            <person name="McClane B.A."/>
            <person name="Titball R.W."/>
            <person name="Rood J.I."/>
            <person name="Melville S.B."/>
            <person name="Paulsen I.T."/>
        </authorList>
    </citation>
    <scope>NUCLEOTIDE SEQUENCE [LARGE SCALE GENOMIC DNA]</scope>
    <source>
        <strain>ATCC 13124 / DSM 756 / JCM 1290 / NCIMB 6125 / NCTC 8237 / S 107 / Type A</strain>
    </source>
</reference>
<protein>
    <recommendedName>
        <fullName evidence="1">Large-conductance mechanosensitive channel</fullName>
    </recommendedName>
</protein>
<sequence>MWKEFKEFAMKGNVIDLAIGVVIGGAFGKIVTSLVNDIIMPVVGSLVGKVDFSNLYINLSGQQFNSLQEAQAAGAATINYGLFLNNLINFLIIAFSIFIVIKQINKLKNFTKKKEEVKVEATEKDCPYCYTKIDIKATRCPHCTSVLEEATN</sequence>
<keyword id="KW-1003">Cell membrane</keyword>
<keyword id="KW-0407">Ion channel</keyword>
<keyword id="KW-0406">Ion transport</keyword>
<keyword id="KW-0472">Membrane</keyword>
<keyword id="KW-0812">Transmembrane</keyword>
<keyword id="KW-1133">Transmembrane helix</keyword>
<keyword id="KW-0813">Transport</keyword>
<organism>
    <name type="scientific">Clostridium perfringens (strain ATCC 13124 / DSM 756 / JCM 1290 / NCIMB 6125 / NCTC 8237 / Type A)</name>
    <dbReference type="NCBI Taxonomy" id="195103"/>
    <lineage>
        <taxon>Bacteria</taxon>
        <taxon>Bacillati</taxon>
        <taxon>Bacillota</taxon>
        <taxon>Clostridia</taxon>
        <taxon>Eubacteriales</taxon>
        <taxon>Clostridiaceae</taxon>
        <taxon>Clostridium</taxon>
    </lineage>
</organism>
<evidence type="ECO:0000255" key="1">
    <source>
        <dbReference type="HAMAP-Rule" id="MF_00115"/>
    </source>
</evidence>
<gene>
    <name evidence="1" type="primary">mscL</name>
    <name type="ordered locus">CPF_0167</name>
</gene>
<proteinExistence type="inferred from homology"/>
<name>MSCL_CLOP1</name>
<feature type="chain" id="PRO_1000015372" description="Large-conductance mechanosensitive channel">
    <location>
        <begin position="1"/>
        <end position="152"/>
    </location>
</feature>
<feature type="transmembrane region" description="Helical" evidence="1">
    <location>
        <begin position="14"/>
        <end position="34"/>
    </location>
</feature>
<feature type="transmembrane region" description="Helical" evidence="1">
    <location>
        <begin position="81"/>
        <end position="101"/>
    </location>
</feature>